<comment type="function">
    <text evidence="1">Catalyzes the interconversion of L-alanine and D-alanine. May also act on other amino acids.</text>
</comment>
<comment type="catalytic activity">
    <reaction evidence="1">
        <text>L-alanine = D-alanine</text>
        <dbReference type="Rhea" id="RHEA:20249"/>
        <dbReference type="ChEBI" id="CHEBI:57416"/>
        <dbReference type="ChEBI" id="CHEBI:57972"/>
        <dbReference type="EC" id="5.1.1.1"/>
    </reaction>
</comment>
<comment type="cofactor">
    <cofactor evidence="1">
        <name>pyridoxal 5'-phosphate</name>
        <dbReference type="ChEBI" id="CHEBI:597326"/>
    </cofactor>
</comment>
<comment type="pathway">
    <text evidence="1">Amino-acid biosynthesis; D-alanine biosynthesis; D-alanine from L-alanine: step 1/1.</text>
</comment>
<comment type="similarity">
    <text evidence="1">Belongs to the alanine racemase family.</text>
</comment>
<evidence type="ECO:0000255" key="1">
    <source>
        <dbReference type="HAMAP-Rule" id="MF_01201"/>
    </source>
</evidence>
<name>ALR_NITV4</name>
<keyword id="KW-0413">Isomerase</keyword>
<keyword id="KW-0663">Pyridoxal phosphate</keyword>
<organism>
    <name type="scientific">Nitratidesulfovibrio vulgaris (strain DP4)</name>
    <name type="common">Desulfovibrio vulgaris</name>
    <dbReference type="NCBI Taxonomy" id="391774"/>
    <lineage>
        <taxon>Bacteria</taxon>
        <taxon>Pseudomonadati</taxon>
        <taxon>Thermodesulfobacteriota</taxon>
        <taxon>Desulfovibrionia</taxon>
        <taxon>Desulfovibrionales</taxon>
        <taxon>Desulfovibrionaceae</taxon>
        <taxon>Nitratidesulfovibrio</taxon>
    </lineage>
</organism>
<dbReference type="EC" id="5.1.1.1" evidence="1"/>
<dbReference type="EMBL" id="CP000527">
    <property type="protein sequence ID" value="ABM29047.1"/>
    <property type="molecule type" value="Genomic_DNA"/>
</dbReference>
<dbReference type="RefSeq" id="WP_011792613.1">
    <property type="nucleotide sequence ID" value="NC_008751.1"/>
</dbReference>
<dbReference type="SMR" id="A1VF31"/>
<dbReference type="KEGG" id="dvl:Dvul_2031"/>
<dbReference type="HOGENOM" id="CLU_028393_2_2_7"/>
<dbReference type="UniPathway" id="UPA00042">
    <property type="reaction ID" value="UER00497"/>
</dbReference>
<dbReference type="Proteomes" id="UP000009173">
    <property type="component" value="Chromosome"/>
</dbReference>
<dbReference type="GO" id="GO:0005829">
    <property type="term" value="C:cytosol"/>
    <property type="evidence" value="ECO:0007669"/>
    <property type="project" value="TreeGrafter"/>
</dbReference>
<dbReference type="GO" id="GO:0008784">
    <property type="term" value="F:alanine racemase activity"/>
    <property type="evidence" value="ECO:0007669"/>
    <property type="project" value="UniProtKB-UniRule"/>
</dbReference>
<dbReference type="GO" id="GO:0030170">
    <property type="term" value="F:pyridoxal phosphate binding"/>
    <property type="evidence" value="ECO:0007669"/>
    <property type="project" value="UniProtKB-UniRule"/>
</dbReference>
<dbReference type="GO" id="GO:0030632">
    <property type="term" value="P:D-alanine biosynthetic process"/>
    <property type="evidence" value="ECO:0007669"/>
    <property type="project" value="UniProtKB-UniRule"/>
</dbReference>
<dbReference type="CDD" id="cd00430">
    <property type="entry name" value="PLPDE_III_AR"/>
    <property type="match status" value="1"/>
</dbReference>
<dbReference type="Gene3D" id="3.20.20.10">
    <property type="entry name" value="Alanine racemase"/>
    <property type="match status" value="1"/>
</dbReference>
<dbReference type="Gene3D" id="2.40.37.10">
    <property type="entry name" value="Lyase, Ornithine Decarboxylase, Chain A, domain 1"/>
    <property type="match status" value="1"/>
</dbReference>
<dbReference type="HAMAP" id="MF_01201">
    <property type="entry name" value="Ala_racemase"/>
    <property type="match status" value="1"/>
</dbReference>
<dbReference type="InterPro" id="IPR000821">
    <property type="entry name" value="Ala_racemase"/>
</dbReference>
<dbReference type="InterPro" id="IPR009006">
    <property type="entry name" value="Ala_racemase/Decarboxylase_C"/>
</dbReference>
<dbReference type="InterPro" id="IPR011079">
    <property type="entry name" value="Ala_racemase_C"/>
</dbReference>
<dbReference type="InterPro" id="IPR001608">
    <property type="entry name" value="Ala_racemase_N"/>
</dbReference>
<dbReference type="InterPro" id="IPR020622">
    <property type="entry name" value="Ala_racemase_pyridoxalP-BS"/>
</dbReference>
<dbReference type="InterPro" id="IPR029066">
    <property type="entry name" value="PLP-binding_barrel"/>
</dbReference>
<dbReference type="NCBIfam" id="TIGR00492">
    <property type="entry name" value="alr"/>
    <property type="match status" value="1"/>
</dbReference>
<dbReference type="PANTHER" id="PTHR30511">
    <property type="entry name" value="ALANINE RACEMASE"/>
    <property type="match status" value="1"/>
</dbReference>
<dbReference type="PANTHER" id="PTHR30511:SF0">
    <property type="entry name" value="ALANINE RACEMASE, CATABOLIC-RELATED"/>
    <property type="match status" value="1"/>
</dbReference>
<dbReference type="Pfam" id="PF00842">
    <property type="entry name" value="Ala_racemase_C"/>
    <property type="match status" value="1"/>
</dbReference>
<dbReference type="Pfam" id="PF01168">
    <property type="entry name" value="Ala_racemase_N"/>
    <property type="match status" value="1"/>
</dbReference>
<dbReference type="PRINTS" id="PR00992">
    <property type="entry name" value="ALARACEMASE"/>
</dbReference>
<dbReference type="SMART" id="SM01005">
    <property type="entry name" value="Ala_racemase_C"/>
    <property type="match status" value="1"/>
</dbReference>
<dbReference type="SUPFAM" id="SSF50621">
    <property type="entry name" value="Alanine racemase C-terminal domain-like"/>
    <property type="match status" value="1"/>
</dbReference>
<dbReference type="SUPFAM" id="SSF51419">
    <property type="entry name" value="PLP-binding barrel"/>
    <property type="match status" value="1"/>
</dbReference>
<dbReference type="PROSITE" id="PS00395">
    <property type="entry name" value="ALANINE_RACEMASE"/>
    <property type="match status" value="1"/>
</dbReference>
<proteinExistence type="inferred from homology"/>
<reference key="1">
    <citation type="journal article" date="2009" name="Environ. Microbiol.">
        <title>Contribution of mobile genetic elements to Desulfovibrio vulgaris genome plasticity.</title>
        <authorList>
            <person name="Walker C.B."/>
            <person name="Stolyar S."/>
            <person name="Chivian D."/>
            <person name="Pinel N."/>
            <person name="Gabster J.A."/>
            <person name="Dehal P.S."/>
            <person name="He Z."/>
            <person name="Yang Z.K."/>
            <person name="Yen H.C."/>
            <person name="Zhou J."/>
            <person name="Wall J.D."/>
            <person name="Hazen T.C."/>
            <person name="Arkin A.P."/>
            <person name="Stahl D.A."/>
        </authorList>
    </citation>
    <scope>NUCLEOTIDE SEQUENCE [LARGE SCALE GENOMIC DNA]</scope>
    <source>
        <strain>DP4</strain>
    </source>
</reference>
<accession>A1VF31</accession>
<protein>
    <recommendedName>
        <fullName evidence="1">Alanine racemase</fullName>
        <ecNumber evidence="1">5.1.1.1</ecNumber>
    </recommendedName>
</protein>
<sequence>MPISYNKASVVVSLQSIIANYRRIRTVAQRPMPVIKSDAYGHGLEAVGMALEAEGARECAVGTVGEGAKLRKAGFGADIVALLGALDREDAQLAASSGIIPTVLDIAGLERLAAQGTTERPVRVALKFDTGMARLGFTEHDVSALCERLRTLPSVRPVMAVSHLAVADDPTQSAFTMAQGAAFARIMAGLRSNFPDIMGSLSNSAATLAHPQLHWDVQRPGIALYGSNPLRGTALARHGEGLLPAMSVSVPVLQVHPLPAGRSISYGRTYTATKDATVAIIAAGYADNYSRALSGRGVAVAGGRRVPVLGRVCMQTTAIDVTDVPGIATGDRVWLLGGPGPATVSADELADLWGTISYEVLCLLGMNPRRHDDSVE</sequence>
<feature type="chain" id="PRO_1000164594" description="Alanine racemase">
    <location>
        <begin position="1"/>
        <end position="376"/>
    </location>
</feature>
<feature type="active site" description="Proton acceptor; specific for D-alanine" evidence="1">
    <location>
        <position position="36"/>
    </location>
</feature>
<feature type="active site" description="Proton acceptor; specific for L-alanine" evidence="1">
    <location>
        <position position="266"/>
    </location>
</feature>
<feature type="binding site" evidence="1">
    <location>
        <position position="134"/>
    </location>
    <ligand>
        <name>substrate</name>
    </ligand>
</feature>
<feature type="binding site" evidence="1">
    <location>
        <position position="314"/>
    </location>
    <ligand>
        <name>substrate</name>
    </ligand>
</feature>
<feature type="modified residue" description="N6-(pyridoxal phosphate)lysine" evidence="1">
    <location>
        <position position="36"/>
    </location>
</feature>
<gene>
    <name type="primary">alr</name>
    <name type="ordered locus">Dvul_2031</name>
</gene>